<protein>
    <recommendedName>
        <fullName>Uncharacterized protein YtxD</fullName>
    </recommendedName>
</protein>
<reference key="1">
    <citation type="journal article" date="1993" name="Mol. Microbiol.">
        <title>Identification of genes involved in utilization of acetate and acetoin in Bacillus subtilis.</title>
        <authorList>
            <person name="Grundy F.J."/>
            <person name="Waters D.A."/>
            <person name="Takova T.Y."/>
            <person name="Henkin T.M."/>
        </authorList>
    </citation>
    <scope>NUCLEOTIDE SEQUENCE [GENOMIC DNA]</scope>
    <source>
        <strain>168</strain>
    </source>
</reference>
<reference key="2">
    <citation type="journal article" date="1997" name="Microbiology">
        <title>Sequencing and functional annotation of the Bacillus subtilis genes in the 200 kb rrnB-dnaB region.</title>
        <authorList>
            <person name="Lapidus A."/>
            <person name="Galleron N."/>
            <person name="Sorokin A."/>
            <person name="Ehrlich S.D."/>
        </authorList>
    </citation>
    <scope>NUCLEOTIDE SEQUENCE [GENOMIC DNA]</scope>
    <source>
        <strain>168</strain>
    </source>
</reference>
<reference key="3">
    <citation type="journal article" date="1997" name="Nature">
        <title>The complete genome sequence of the Gram-positive bacterium Bacillus subtilis.</title>
        <authorList>
            <person name="Kunst F."/>
            <person name="Ogasawara N."/>
            <person name="Moszer I."/>
            <person name="Albertini A.M."/>
            <person name="Alloni G."/>
            <person name="Azevedo V."/>
            <person name="Bertero M.G."/>
            <person name="Bessieres P."/>
            <person name="Bolotin A."/>
            <person name="Borchert S."/>
            <person name="Borriss R."/>
            <person name="Boursier L."/>
            <person name="Brans A."/>
            <person name="Braun M."/>
            <person name="Brignell S.C."/>
            <person name="Bron S."/>
            <person name="Brouillet S."/>
            <person name="Bruschi C.V."/>
            <person name="Caldwell B."/>
            <person name="Capuano V."/>
            <person name="Carter N.M."/>
            <person name="Choi S.-K."/>
            <person name="Codani J.-J."/>
            <person name="Connerton I.F."/>
            <person name="Cummings N.J."/>
            <person name="Daniel R.A."/>
            <person name="Denizot F."/>
            <person name="Devine K.M."/>
            <person name="Duesterhoeft A."/>
            <person name="Ehrlich S.D."/>
            <person name="Emmerson P.T."/>
            <person name="Entian K.-D."/>
            <person name="Errington J."/>
            <person name="Fabret C."/>
            <person name="Ferrari E."/>
            <person name="Foulger D."/>
            <person name="Fritz C."/>
            <person name="Fujita M."/>
            <person name="Fujita Y."/>
            <person name="Fuma S."/>
            <person name="Galizzi A."/>
            <person name="Galleron N."/>
            <person name="Ghim S.-Y."/>
            <person name="Glaser P."/>
            <person name="Goffeau A."/>
            <person name="Golightly E.J."/>
            <person name="Grandi G."/>
            <person name="Guiseppi G."/>
            <person name="Guy B.J."/>
            <person name="Haga K."/>
            <person name="Haiech J."/>
            <person name="Harwood C.R."/>
            <person name="Henaut A."/>
            <person name="Hilbert H."/>
            <person name="Holsappel S."/>
            <person name="Hosono S."/>
            <person name="Hullo M.-F."/>
            <person name="Itaya M."/>
            <person name="Jones L.-M."/>
            <person name="Joris B."/>
            <person name="Karamata D."/>
            <person name="Kasahara Y."/>
            <person name="Klaerr-Blanchard M."/>
            <person name="Klein C."/>
            <person name="Kobayashi Y."/>
            <person name="Koetter P."/>
            <person name="Koningstein G."/>
            <person name="Krogh S."/>
            <person name="Kumano M."/>
            <person name="Kurita K."/>
            <person name="Lapidus A."/>
            <person name="Lardinois S."/>
            <person name="Lauber J."/>
            <person name="Lazarevic V."/>
            <person name="Lee S.-M."/>
            <person name="Levine A."/>
            <person name="Liu H."/>
            <person name="Masuda S."/>
            <person name="Mauel C."/>
            <person name="Medigue C."/>
            <person name="Medina N."/>
            <person name="Mellado R.P."/>
            <person name="Mizuno M."/>
            <person name="Moestl D."/>
            <person name="Nakai S."/>
            <person name="Noback M."/>
            <person name="Noone D."/>
            <person name="O'Reilly M."/>
            <person name="Ogawa K."/>
            <person name="Ogiwara A."/>
            <person name="Oudega B."/>
            <person name="Park S.-H."/>
            <person name="Parro V."/>
            <person name="Pohl T.M."/>
            <person name="Portetelle D."/>
            <person name="Porwollik S."/>
            <person name="Prescott A.M."/>
            <person name="Presecan E."/>
            <person name="Pujic P."/>
            <person name="Purnelle B."/>
            <person name="Rapoport G."/>
            <person name="Rey M."/>
            <person name="Reynolds S."/>
            <person name="Rieger M."/>
            <person name="Rivolta C."/>
            <person name="Rocha E."/>
            <person name="Roche B."/>
            <person name="Rose M."/>
            <person name="Sadaie Y."/>
            <person name="Sato T."/>
            <person name="Scanlan E."/>
            <person name="Schleich S."/>
            <person name="Schroeter R."/>
            <person name="Scoffone F."/>
            <person name="Sekiguchi J."/>
            <person name="Sekowska A."/>
            <person name="Seror S.J."/>
            <person name="Serror P."/>
            <person name="Shin B.-S."/>
            <person name="Soldo B."/>
            <person name="Sorokin A."/>
            <person name="Tacconi E."/>
            <person name="Takagi T."/>
            <person name="Takahashi H."/>
            <person name="Takemaru K."/>
            <person name="Takeuchi M."/>
            <person name="Tamakoshi A."/>
            <person name="Tanaka T."/>
            <person name="Terpstra P."/>
            <person name="Tognoni A."/>
            <person name="Tosato V."/>
            <person name="Uchiyama S."/>
            <person name="Vandenbol M."/>
            <person name="Vannier F."/>
            <person name="Vassarotti A."/>
            <person name="Viari A."/>
            <person name="Wambutt R."/>
            <person name="Wedler E."/>
            <person name="Wedler H."/>
            <person name="Weitzenegger T."/>
            <person name="Winters P."/>
            <person name="Wipat A."/>
            <person name="Yamamoto H."/>
            <person name="Yamane K."/>
            <person name="Yasumoto K."/>
            <person name="Yata K."/>
            <person name="Yoshida K."/>
            <person name="Yoshikawa H.-F."/>
            <person name="Zumstein E."/>
            <person name="Yoshikawa H."/>
            <person name="Danchin A."/>
        </authorList>
    </citation>
    <scope>NUCLEOTIDE SEQUENCE [LARGE SCALE GENOMIC DNA]</scope>
    <source>
        <strain>168</strain>
    </source>
</reference>
<name>YTXD_BACSU</name>
<proteinExistence type="inferred from homology"/>
<sequence>MKRFDYLTPVGFVLGTIIIVIGIISGSGVSGFRSFLDLTSFFIVTGGLCAAVFISFPPSELKKAPSVLKQAFIRQEDNVKDLVKTFVSLSDHARKHGLLSLDDQAREIKDPFLKKGLLLAIDGWDEETIRLVMDSEIAAMEERHRKGRRVFEKAGEFAPAWGMIGTLVGLVLMLKNLNDPHMLGPNMAIALLTTLYGSLLANMVFNPIAAKLEEKTESEIFIKQVMVEGIIGVQSGKNPRNLESQLVVFSSREEWQKQPKQVKTKKGSVHEA</sequence>
<feature type="chain" id="PRO_0000189583" description="Uncharacterized protein YtxD">
    <location>
        <begin position="1"/>
        <end position="272"/>
    </location>
</feature>
<feature type="transmembrane region" description="Helical" evidence="1">
    <location>
        <begin position="9"/>
        <end position="29"/>
    </location>
</feature>
<feature type="transmembrane region" description="Helical" evidence="1">
    <location>
        <begin position="38"/>
        <end position="58"/>
    </location>
</feature>
<feature type="transmembrane region" description="Helical" evidence="1">
    <location>
        <begin position="154"/>
        <end position="174"/>
    </location>
</feature>
<feature type="transmembrane region" description="Helical" evidence="1">
    <location>
        <begin position="188"/>
        <end position="208"/>
    </location>
</feature>
<feature type="topological domain" description="Cytoplasmic" evidence="1">
    <location>
        <begin position="209"/>
        <end position="272"/>
    </location>
</feature>
<gene>
    <name type="primary">ytxD</name>
    <name type="ordered locus">BSU29730</name>
</gene>
<organism>
    <name type="scientific">Bacillus subtilis (strain 168)</name>
    <dbReference type="NCBI Taxonomy" id="224308"/>
    <lineage>
        <taxon>Bacteria</taxon>
        <taxon>Bacillati</taxon>
        <taxon>Bacillota</taxon>
        <taxon>Bacilli</taxon>
        <taxon>Bacillales</taxon>
        <taxon>Bacillaceae</taxon>
        <taxon>Bacillus</taxon>
    </lineage>
</organism>
<evidence type="ECO:0000255" key="1"/>
<evidence type="ECO:0000305" key="2"/>
<accession>P39063</accession>
<comment type="function">
    <text>May be involved in some transport function.</text>
</comment>
<comment type="subcellular location">
    <subcellularLocation>
        <location evidence="2">Cell membrane</location>
        <topology evidence="2">Multi-pass membrane protein</topology>
    </subcellularLocation>
</comment>
<comment type="similarity">
    <text evidence="2">Belongs to the MotA family.</text>
</comment>
<keyword id="KW-1003">Cell membrane</keyword>
<keyword id="KW-0472">Membrane</keyword>
<keyword id="KW-1185">Reference proteome</keyword>
<keyword id="KW-0812">Transmembrane</keyword>
<keyword id="KW-1133">Transmembrane helix</keyword>
<keyword id="KW-0813">Transport</keyword>
<dbReference type="EMBL" id="L17309">
    <property type="protein sequence ID" value="AAA68282.1"/>
    <property type="molecule type" value="Genomic_DNA"/>
</dbReference>
<dbReference type="EMBL" id="AF008220">
    <property type="protein sequence ID" value="AAC00300.1"/>
    <property type="molecule type" value="Genomic_DNA"/>
</dbReference>
<dbReference type="EMBL" id="AL009126">
    <property type="protein sequence ID" value="CAB14951.1"/>
    <property type="molecule type" value="Genomic_DNA"/>
</dbReference>
<dbReference type="PIR" id="S39641">
    <property type="entry name" value="S39641"/>
</dbReference>
<dbReference type="SMR" id="P39063"/>
<dbReference type="FunCoup" id="P39063">
    <property type="interactions" value="402"/>
</dbReference>
<dbReference type="STRING" id="224308.BSU29730"/>
<dbReference type="TCDB" id="1.A.30.1.4">
    <property type="family name" value="the h(+)- or na(+)-translocating bacterial flagellar motor/exbbd outer membrane transport energizer (mot/exb) superfamily"/>
</dbReference>
<dbReference type="PaxDb" id="224308-BSU29730"/>
<dbReference type="EnsemblBacteria" id="CAB14951">
    <property type="protein sequence ID" value="CAB14951"/>
    <property type="gene ID" value="BSU_29730"/>
</dbReference>
<dbReference type="GeneID" id="937317"/>
<dbReference type="KEGG" id="bsu:BSU29730"/>
<dbReference type="PATRIC" id="fig|224308.179.peg.3231"/>
<dbReference type="eggNOG" id="COG1291">
    <property type="taxonomic scope" value="Bacteria"/>
</dbReference>
<dbReference type="InParanoid" id="P39063"/>
<dbReference type="OrthoDB" id="9806929at2"/>
<dbReference type="PhylomeDB" id="P39063"/>
<dbReference type="BioCyc" id="BSUB:BSU29730-MONOMER"/>
<dbReference type="Proteomes" id="UP000001570">
    <property type="component" value="Chromosome"/>
</dbReference>
<dbReference type="GO" id="GO:0005886">
    <property type="term" value="C:plasma membrane"/>
    <property type="evidence" value="ECO:0000318"/>
    <property type="project" value="GO_Central"/>
</dbReference>
<dbReference type="GO" id="GO:0071978">
    <property type="term" value="P:bacterial-type flagellum-dependent swarming motility"/>
    <property type="evidence" value="ECO:0000318"/>
    <property type="project" value="GO_Central"/>
</dbReference>
<dbReference type="GO" id="GO:0006935">
    <property type="term" value="P:chemotaxis"/>
    <property type="evidence" value="ECO:0007669"/>
    <property type="project" value="InterPro"/>
</dbReference>
<dbReference type="InterPro" id="IPR000540">
    <property type="entry name" value="Flag_MotA_CS"/>
</dbReference>
<dbReference type="InterPro" id="IPR047055">
    <property type="entry name" value="MotA-like"/>
</dbReference>
<dbReference type="InterPro" id="IPR002898">
    <property type="entry name" value="MotA_ExbB_proton_chnl"/>
</dbReference>
<dbReference type="NCBIfam" id="NF005383">
    <property type="entry name" value="PRK06926.1"/>
    <property type="match status" value="1"/>
</dbReference>
<dbReference type="PANTHER" id="PTHR30433">
    <property type="entry name" value="CHEMOTAXIS PROTEIN MOTA"/>
    <property type="match status" value="1"/>
</dbReference>
<dbReference type="PANTHER" id="PTHR30433:SF2">
    <property type="entry name" value="MOTILITY PROTEIN A"/>
    <property type="match status" value="1"/>
</dbReference>
<dbReference type="Pfam" id="PF01618">
    <property type="entry name" value="MotA_ExbB"/>
    <property type="match status" value="1"/>
</dbReference>
<dbReference type="PROSITE" id="PS01307">
    <property type="entry name" value="MOTA"/>
    <property type="match status" value="1"/>
</dbReference>